<organism>
    <name type="scientific">Rattus norvegicus</name>
    <name type="common">Rat</name>
    <dbReference type="NCBI Taxonomy" id="10116"/>
    <lineage>
        <taxon>Eukaryota</taxon>
        <taxon>Metazoa</taxon>
        <taxon>Chordata</taxon>
        <taxon>Craniata</taxon>
        <taxon>Vertebrata</taxon>
        <taxon>Euteleostomi</taxon>
        <taxon>Mammalia</taxon>
        <taxon>Eutheria</taxon>
        <taxon>Euarchontoglires</taxon>
        <taxon>Glires</taxon>
        <taxon>Rodentia</taxon>
        <taxon>Myomorpha</taxon>
        <taxon>Muroidea</taxon>
        <taxon>Muridae</taxon>
        <taxon>Murinae</taxon>
        <taxon>Rattus</taxon>
    </lineage>
</organism>
<keyword id="KW-1015">Disulfide bond</keyword>
<keyword id="KW-0278">Fertilization</keyword>
<keyword id="KW-0325">Glycoprotein</keyword>
<keyword id="KW-0481">Metalloenzyme inhibitor</keyword>
<keyword id="KW-0483">Metalloprotease inhibitor</keyword>
<keyword id="KW-0597">Phosphoprotein</keyword>
<keyword id="KW-0646">Protease inhibitor</keyword>
<keyword id="KW-1185">Reference proteome</keyword>
<keyword id="KW-0677">Repeat</keyword>
<keyword id="KW-0964">Secreted</keyword>
<keyword id="KW-0732">Signal</keyword>
<accession>Q9QX79</accession>
<accession>F1LN83</accession>
<evidence type="ECO:0000250" key="1"/>
<evidence type="ECO:0000250" key="2">
    <source>
        <dbReference type="UniProtKB" id="Q58D62"/>
    </source>
</evidence>
<evidence type="ECO:0000250" key="3">
    <source>
        <dbReference type="UniProtKB" id="Q9UGM5"/>
    </source>
</evidence>
<evidence type="ECO:0000255" key="4"/>
<evidence type="ECO:0000255" key="5">
    <source>
        <dbReference type="PROSITE-ProRule" id="PRU00862"/>
    </source>
</evidence>
<evidence type="ECO:0000256" key="6">
    <source>
        <dbReference type="SAM" id="MobiDB-lite"/>
    </source>
</evidence>
<evidence type="ECO:0000305" key="7"/>
<sequence>MGVLRLLVLCTLAACCVARSPPAPPLPNAPFAPLRPLGCNDSEVLAVAGFALQNINRVQKDGYMLTLNRVHDARVHRQEDMGSLFYLMLDVLETGCHVLSRKALKDCGPRIFYETVHGQCKAMFHVNKPRRVLYLPAYNCTLRPVSKRKIHSMCPDCPHPVDLSAPSVLEAATESLAKFNSENPSKQYALVKVTKATTQWVVGPSYFVEYLIKESPCTQSQDSCSLQASDSEPVGLCQGSLIKSPGVPPQRFKKTVTVSCEFFESQDQVPGGENPADTQDAKKLPQKNTAPTSSPSITAPRGSIQHLPEQEEPEDSKGKSPEEPFPVQLDLTTNPQGDTLDVSFLYLEPEEKKLVVLPFPGKEQRSPECPGPEKQRTP</sequence>
<reference key="1">
    <citation type="journal article" date="2000" name="Biochem. J.">
        <title>Fetuin-B, a second member of the fetuin family in mammals.</title>
        <authorList>
            <person name="Olivier E."/>
            <person name="Soury E."/>
            <person name="Ruminy P."/>
            <person name="Husson A."/>
            <person name="Parmentier F."/>
            <person name="Daveau M."/>
            <person name="Salier J.-P."/>
        </authorList>
    </citation>
    <scope>NUCLEOTIDE SEQUENCE [MRNA]</scope>
    <source>
        <strain>Sprague-Dawley</strain>
        <tissue>Liver</tissue>
    </source>
</reference>
<reference key="2">
    <citation type="journal article" date="2004" name="Nature">
        <title>Genome sequence of the Brown Norway rat yields insights into mammalian evolution.</title>
        <authorList>
            <person name="Gibbs R.A."/>
            <person name="Weinstock G.M."/>
            <person name="Metzker M.L."/>
            <person name="Muzny D.M."/>
            <person name="Sodergren E.J."/>
            <person name="Scherer S."/>
            <person name="Scott G."/>
            <person name="Steffen D."/>
            <person name="Worley K.C."/>
            <person name="Burch P.E."/>
            <person name="Okwuonu G."/>
            <person name="Hines S."/>
            <person name="Lewis L."/>
            <person name="Deramo C."/>
            <person name="Delgado O."/>
            <person name="Dugan-Rocha S."/>
            <person name="Miner G."/>
            <person name="Morgan M."/>
            <person name="Hawes A."/>
            <person name="Gill R."/>
            <person name="Holt R.A."/>
            <person name="Adams M.D."/>
            <person name="Amanatides P.G."/>
            <person name="Baden-Tillson H."/>
            <person name="Barnstead M."/>
            <person name="Chin S."/>
            <person name="Evans C.A."/>
            <person name="Ferriera S."/>
            <person name="Fosler C."/>
            <person name="Glodek A."/>
            <person name="Gu Z."/>
            <person name="Jennings D."/>
            <person name="Kraft C.L."/>
            <person name="Nguyen T."/>
            <person name="Pfannkoch C.M."/>
            <person name="Sitter C."/>
            <person name="Sutton G.G."/>
            <person name="Venter J.C."/>
            <person name="Woodage T."/>
            <person name="Smith D."/>
            <person name="Lee H.-M."/>
            <person name="Gustafson E."/>
            <person name="Cahill P."/>
            <person name="Kana A."/>
            <person name="Doucette-Stamm L."/>
            <person name="Weinstock K."/>
            <person name="Fechtel K."/>
            <person name="Weiss R.B."/>
            <person name="Dunn D.M."/>
            <person name="Green E.D."/>
            <person name="Blakesley R.W."/>
            <person name="Bouffard G.G."/>
            <person name="De Jong P.J."/>
            <person name="Osoegawa K."/>
            <person name="Zhu B."/>
            <person name="Marra M."/>
            <person name="Schein J."/>
            <person name="Bosdet I."/>
            <person name="Fjell C."/>
            <person name="Jones S."/>
            <person name="Krzywinski M."/>
            <person name="Mathewson C."/>
            <person name="Siddiqui A."/>
            <person name="Wye N."/>
            <person name="McPherson J."/>
            <person name="Zhao S."/>
            <person name="Fraser C.M."/>
            <person name="Shetty J."/>
            <person name="Shatsman S."/>
            <person name="Geer K."/>
            <person name="Chen Y."/>
            <person name="Abramzon S."/>
            <person name="Nierman W.C."/>
            <person name="Havlak P.H."/>
            <person name="Chen R."/>
            <person name="Durbin K.J."/>
            <person name="Egan A."/>
            <person name="Ren Y."/>
            <person name="Song X.-Z."/>
            <person name="Li B."/>
            <person name="Liu Y."/>
            <person name="Qin X."/>
            <person name="Cawley S."/>
            <person name="Cooney A.J."/>
            <person name="D'Souza L.M."/>
            <person name="Martin K."/>
            <person name="Wu J.Q."/>
            <person name="Gonzalez-Garay M.L."/>
            <person name="Jackson A.R."/>
            <person name="Kalafus K.J."/>
            <person name="McLeod M.P."/>
            <person name="Milosavljevic A."/>
            <person name="Virk D."/>
            <person name="Volkov A."/>
            <person name="Wheeler D.A."/>
            <person name="Zhang Z."/>
            <person name="Bailey J.A."/>
            <person name="Eichler E.E."/>
            <person name="Tuzun E."/>
            <person name="Birney E."/>
            <person name="Mongin E."/>
            <person name="Ureta-Vidal A."/>
            <person name="Woodwark C."/>
            <person name="Zdobnov E."/>
            <person name="Bork P."/>
            <person name="Suyama M."/>
            <person name="Torrents D."/>
            <person name="Alexandersson M."/>
            <person name="Trask B.J."/>
            <person name="Young J.M."/>
            <person name="Huang H."/>
            <person name="Wang H."/>
            <person name="Xing H."/>
            <person name="Daniels S."/>
            <person name="Gietzen D."/>
            <person name="Schmidt J."/>
            <person name="Stevens K."/>
            <person name="Vitt U."/>
            <person name="Wingrove J."/>
            <person name="Camara F."/>
            <person name="Mar Alba M."/>
            <person name="Abril J.F."/>
            <person name="Guigo R."/>
            <person name="Smit A."/>
            <person name="Dubchak I."/>
            <person name="Rubin E.M."/>
            <person name="Couronne O."/>
            <person name="Poliakov A."/>
            <person name="Huebner N."/>
            <person name="Ganten D."/>
            <person name="Goesele C."/>
            <person name="Hummel O."/>
            <person name="Kreitler T."/>
            <person name="Lee Y.-A."/>
            <person name="Monti J."/>
            <person name="Schulz H."/>
            <person name="Zimdahl H."/>
            <person name="Himmelbauer H."/>
            <person name="Lehrach H."/>
            <person name="Jacob H.J."/>
            <person name="Bromberg S."/>
            <person name="Gullings-Handley J."/>
            <person name="Jensen-Seaman M.I."/>
            <person name="Kwitek A.E."/>
            <person name="Lazar J."/>
            <person name="Pasko D."/>
            <person name="Tonellato P.J."/>
            <person name="Twigger S."/>
            <person name="Ponting C.P."/>
            <person name="Duarte J.M."/>
            <person name="Rice S."/>
            <person name="Goodstadt L."/>
            <person name="Beatson S.A."/>
            <person name="Emes R.D."/>
            <person name="Winter E.E."/>
            <person name="Webber C."/>
            <person name="Brandt P."/>
            <person name="Nyakatura G."/>
            <person name="Adetobi M."/>
            <person name="Chiaromonte F."/>
            <person name="Elnitski L."/>
            <person name="Eswara P."/>
            <person name="Hardison R.C."/>
            <person name="Hou M."/>
            <person name="Kolbe D."/>
            <person name="Makova K."/>
            <person name="Miller W."/>
            <person name="Nekrutenko A."/>
            <person name="Riemer C."/>
            <person name="Schwartz S."/>
            <person name="Taylor J."/>
            <person name="Yang S."/>
            <person name="Zhang Y."/>
            <person name="Lindpaintner K."/>
            <person name="Andrews T.D."/>
            <person name="Caccamo M."/>
            <person name="Clamp M."/>
            <person name="Clarke L."/>
            <person name="Curwen V."/>
            <person name="Durbin R.M."/>
            <person name="Eyras E."/>
            <person name="Searle S.M."/>
            <person name="Cooper G.M."/>
            <person name="Batzoglou S."/>
            <person name="Brudno M."/>
            <person name="Sidow A."/>
            <person name="Stone E.A."/>
            <person name="Payseur B.A."/>
            <person name="Bourque G."/>
            <person name="Lopez-Otin C."/>
            <person name="Puente X.S."/>
            <person name="Chakrabarti K."/>
            <person name="Chatterji S."/>
            <person name="Dewey C."/>
            <person name="Pachter L."/>
            <person name="Bray N."/>
            <person name="Yap V.B."/>
            <person name="Caspi A."/>
            <person name="Tesler G."/>
            <person name="Pevzner P.A."/>
            <person name="Haussler D."/>
            <person name="Roskin K.M."/>
            <person name="Baertsch R."/>
            <person name="Clawson H."/>
            <person name="Furey T.S."/>
            <person name="Hinrichs A.S."/>
            <person name="Karolchik D."/>
            <person name="Kent W.J."/>
            <person name="Rosenbloom K.R."/>
            <person name="Trumbower H."/>
            <person name="Weirauch M."/>
            <person name="Cooper D.N."/>
            <person name="Stenson P.D."/>
            <person name="Ma B."/>
            <person name="Brent M."/>
            <person name="Arumugam M."/>
            <person name="Shteynberg D."/>
            <person name="Copley R.R."/>
            <person name="Taylor M.S."/>
            <person name="Riethman H."/>
            <person name="Mudunuri U."/>
            <person name="Peterson J."/>
            <person name="Guyer M."/>
            <person name="Felsenfeld A."/>
            <person name="Old S."/>
            <person name="Mockrin S."/>
            <person name="Collins F.S."/>
        </authorList>
    </citation>
    <scope>NUCLEOTIDE SEQUENCE [LARGE SCALE GENOMIC DNA]</scope>
    <source>
        <strain>Brown Norway</strain>
    </source>
</reference>
<dbReference type="EMBL" id="AJ242926">
    <property type="protein sequence ID" value="CAB62543.1"/>
    <property type="molecule type" value="mRNA"/>
</dbReference>
<dbReference type="EMBL" id="AABR06069363">
    <property type="status" value="NOT_ANNOTATED_CDS"/>
    <property type="molecule type" value="Genomic_DNA"/>
</dbReference>
<dbReference type="RefSeq" id="NP_445800.2">
    <property type="nucleotide sequence ID" value="NM_053348.2"/>
</dbReference>
<dbReference type="SMR" id="Q9QX79"/>
<dbReference type="FunCoup" id="Q9QX79">
    <property type="interactions" value="103"/>
</dbReference>
<dbReference type="IntAct" id="Q9QX79">
    <property type="interactions" value="3"/>
</dbReference>
<dbReference type="STRING" id="10116.ENSRNOP00000051504"/>
<dbReference type="MEROPS" id="I25.067"/>
<dbReference type="GlyCosmos" id="Q9QX79">
    <property type="glycosylation" value="4 sites, No reported glycans"/>
</dbReference>
<dbReference type="GlyGen" id="Q9QX79">
    <property type="glycosylation" value="4 sites"/>
</dbReference>
<dbReference type="iPTMnet" id="Q9QX79"/>
<dbReference type="PhosphoSitePlus" id="Q9QX79"/>
<dbReference type="SwissPalm" id="Q9QX79"/>
<dbReference type="PaxDb" id="10116-ENSRNOP00000051504"/>
<dbReference type="GeneID" id="83928"/>
<dbReference type="KEGG" id="rno:83928"/>
<dbReference type="UCSC" id="RGD:69293">
    <property type="organism name" value="rat"/>
</dbReference>
<dbReference type="AGR" id="RGD:69293"/>
<dbReference type="CTD" id="26998"/>
<dbReference type="RGD" id="69293">
    <property type="gene designation" value="Fetub"/>
</dbReference>
<dbReference type="eggNOG" id="ENOG502S28K">
    <property type="taxonomic scope" value="Eukaryota"/>
</dbReference>
<dbReference type="InParanoid" id="Q9QX79"/>
<dbReference type="PRO" id="PR:Q9QX79"/>
<dbReference type="Proteomes" id="UP000002494">
    <property type="component" value="Unplaced"/>
</dbReference>
<dbReference type="GO" id="GO:0005576">
    <property type="term" value="C:extracellular region"/>
    <property type="evidence" value="ECO:0000318"/>
    <property type="project" value="GO_Central"/>
</dbReference>
<dbReference type="GO" id="GO:0005615">
    <property type="term" value="C:extracellular space"/>
    <property type="evidence" value="ECO:0007669"/>
    <property type="project" value="InterPro"/>
</dbReference>
<dbReference type="GO" id="GO:0004869">
    <property type="term" value="F:cysteine-type endopeptidase inhibitor activity"/>
    <property type="evidence" value="ECO:0007669"/>
    <property type="project" value="InterPro"/>
</dbReference>
<dbReference type="GO" id="GO:0008191">
    <property type="term" value="F:metalloendopeptidase inhibitor activity"/>
    <property type="evidence" value="ECO:0000250"/>
    <property type="project" value="UniProtKB"/>
</dbReference>
<dbReference type="GO" id="GO:0007339">
    <property type="term" value="P:binding of sperm to zona pellucida"/>
    <property type="evidence" value="ECO:0000250"/>
    <property type="project" value="UniProtKB"/>
</dbReference>
<dbReference type="GO" id="GO:0010951">
    <property type="term" value="P:negative regulation of endopeptidase activity"/>
    <property type="evidence" value="ECO:0000250"/>
    <property type="project" value="UniProtKB"/>
</dbReference>
<dbReference type="GO" id="GO:0007338">
    <property type="term" value="P:single fertilization"/>
    <property type="evidence" value="ECO:0000250"/>
    <property type="project" value="UniProtKB"/>
</dbReference>
<dbReference type="CDD" id="cd00042">
    <property type="entry name" value="CY"/>
    <property type="match status" value="2"/>
</dbReference>
<dbReference type="FunFam" id="3.10.450.10:FF:000037">
    <property type="entry name" value="Fetuin-B"/>
    <property type="match status" value="1"/>
</dbReference>
<dbReference type="FunFam" id="3.10.450.10:FF:000005">
    <property type="entry name" value="Histidine-rich glycoprotein"/>
    <property type="match status" value="1"/>
</dbReference>
<dbReference type="Gene3D" id="3.10.450.10">
    <property type="match status" value="2"/>
</dbReference>
<dbReference type="InterPro" id="IPR000010">
    <property type="entry name" value="Cystatin_dom"/>
</dbReference>
<dbReference type="InterPro" id="IPR025764">
    <property type="entry name" value="Cystatin_Fetuin_B"/>
</dbReference>
<dbReference type="InterPro" id="IPR046350">
    <property type="entry name" value="Cystatin_sf"/>
</dbReference>
<dbReference type="InterPro" id="IPR050735">
    <property type="entry name" value="Kininogen_Fetuin_HRG"/>
</dbReference>
<dbReference type="InterPro" id="IPR001363">
    <property type="entry name" value="Prot_inh_fetuin_CS"/>
</dbReference>
<dbReference type="PANTHER" id="PTHR13814">
    <property type="entry name" value="FETUIN"/>
    <property type="match status" value="1"/>
</dbReference>
<dbReference type="PANTHER" id="PTHR13814:SF10">
    <property type="entry name" value="FETUIN-B"/>
    <property type="match status" value="1"/>
</dbReference>
<dbReference type="Pfam" id="PF00031">
    <property type="entry name" value="Cystatin"/>
    <property type="match status" value="2"/>
</dbReference>
<dbReference type="SMART" id="SM00043">
    <property type="entry name" value="CY"/>
    <property type="match status" value="2"/>
</dbReference>
<dbReference type="SUPFAM" id="SSF54403">
    <property type="entry name" value="Cystatin/monellin"/>
    <property type="match status" value="2"/>
</dbReference>
<dbReference type="PROSITE" id="PS51530">
    <property type="entry name" value="CYSTATIN_FETUIN_B"/>
    <property type="match status" value="2"/>
</dbReference>
<dbReference type="PROSITE" id="PS01254">
    <property type="entry name" value="FETUIN_1"/>
    <property type="match status" value="1"/>
</dbReference>
<dbReference type="PROSITE" id="PS01255">
    <property type="entry name" value="FETUIN_2"/>
    <property type="match status" value="1"/>
</dbReference>
<comment type="function">
    <text evidence="1">Protease inhibitor required for egg fertilization. Required to prevent premature zona pellucida hardening before fertilization, probably by inhibiting the protease activity of ASTL, a protease that mediates the cleavage of ZP2 and triggers zona pellucida hardening (By similarity).</text>
</comment>
<comment type="subcellular location">
    <subcellularLocation>
        <location evidence="1">Secreted</location>
    </subcellularLocation>
</comment>
<comment type="tissue specificity">
    <text>Liver.</text>
</comment>
<comment type="similarity">
    <text evidence="5">Belongs to the fetuin family.</text>
</comment>
<name>FETUB_RAT</name>
<gene>
    <name type="primary">Fetub</name>
</gene>
<protein>
    <recommendedName>
        <fullName>Fetuin-B</fullName>
    </recommendedName>
    <alternativeName>
        <fullName>Fetuin-like protein IRL685</fullName>
    </alternativeName>
</protein>
<proteinExistence type="evidence at transcript level"/>
<feature type="signal peptide" evidence="4">
    <location>
        <begin position="1"/>
        <end position="18"/>
    </location>
</feature>
<feature type="chain" id="PRO_0000008901" description="Fetuin-B">
    <location>
        <begin position="19"/>
        <end position="378"/>
    </location>
</feature>
<feature type="domain" description="Cystatin fetuin-B-type 1" evidence="5">
    <location>
        <begin position="28"/>
        <end position="141"/>
    </location>
</feature>
<feature type="domain" description="Cystatin fetuin-B-type 2" evidence="5">
    <location>
        <begin position="152"/>
        <end position="261"/>
    </location>
</feature>
<feature type="region of interest" description="Disordered" evidence="6">
    <location>
        <begin position="266"/>
        <end position="338"/>
    </location>
</feature>
<feature type="region of interest" description="Disordered" evidence="6">
    <location>
        <begin position="357"/>
        <end position="378"/>
    </location>
</feature>
<feature type="compositionally biased region" description="Polar residues" evidence="6">
    <location>
        <begin position="286"/>
        <end position="297"/>
    </location>
</feature>
<feature type="compositionally biased region" description="Basic and acidic residues" evidence="6">
    <location>
        <begin position="362"/>
        <end position="378"/>
    </location>
</feature>
<feature type="modified residue" description="Phosphoserine" evidence="3">
    <location>
        <position position="316"/>
    </location>
</feature>
<feature type="glycosylation site" description="N-linked (GlcNAc...) asparagine" evidence="4">
    <location>
        <position position="40"/>
    </location>
</feature>
<feature type="glycosylation site" description="N-linked (GlcNAc...) asparagine" evidence="4">
    <location>
        <position position="139"/>
    </location>
</feature>
<feature type="glycosylation site" description="O-linked (GalNAc...) threonine" evidence="2">
    <location>
        <position position="289"/>
    </location>
</feature>
<feature type="glycosylation site" description="O-linked (GalNAc...) threonine" evidence="2">
    <location>
        <position position="292"/>
    </location>
</feature>
<feature type="disulfide bond" evidence="5">
    <location>
        <begin position="96"/>
        <end position="107"/>
    </location>
</feature>
<feature type="disulfide bond" evidence="5">
    <location>
        <begin position="120"/>
        <end position="140"/>
    </location>
</feature>
<feature type="disulfide bond" evidence="5">
    <location>
        <begin position="154"/>
        <end position="157"/>
    </location>
</feature>
<feature type="disulfide bond" evidence="5">
    <location>
        <begin position="217"/>
        <end position="224"/>
    </location>
</feature>
<feature type="disulfide bond" evidence="5">
    <location>
        <begin position="237"/>
        <end position="260"/>
    </location>
</feature>
<feature type="sequence conflict" description="In Ref. 1; CAB62543." evidence="7" ref="1">
    <original>M</original>
    <variation>T</variation>
    <location>
        <position position="88"/>
    </location>
</feature>